<evidence type="ECO:0000255" key="1">
    <source>
        <dbReference type="HAMAP-Rule" id="MF_01151"/>
    </source>
</evidence>
<evidence type="ECO:0000256" key="2">
    <source>
        <dbReference type="SAM" id="MobiDB-lite"/>
    </source>
</evidence>
<feature type="chain" id="PRO_1000164177" description="Protein GrpE">
    <location>
        <begin position="1"/>
        <end position="222"/>
    </location>
</feature>
<feature type="region of interest" description="Disordered" evidence="2">
    <location>
        <begin position="1"/>
        <end position="21"/>
    </location>
</feature>
<dbReference type="EMBL" id="AM260525">
    <property type="protein sequence ID" value="CAK00557.1"/>
    <property type="molecule type" value="Genomic_DNA"/>
</dbReference>
<dbReference type="RefSeq" id="WP_012230354.1">
    <property type="nucleotide sequence ID" value="NC_010161.1"/>
</dbReference>
<dbReference type="SMR" id="A9ILE9"/>
<dbReference type="KEGG" id="btr:BT_0056"/>
<dbReference type="eggNOG" id="COG0576">
    <property type="taxonomic scope" value="Bacteria"/>
</dbReference>
<dbReference type="HOGENOM" id="CLU_057217_6_2_5"/>
<dbReference type="Proteomes" id="UP000001592">
    <property type="component" value="Chromosome"/>
</dbReference>
<dbReference type="GO" id="GO:0005737">
    <property type="term" value="C:cytoplasm"/>
    <property type="evidence" value="ECO:0007669"/>
    <property type="project" value="UniProtKB-SubCell"/>
</dbReference>
<dbReference type="GO" id="GO:0000774">
    <property type="term" value="F:adenyl-nucleotide exchange factor activity"/>
    <property type="evidence" value="ECO:0007669"/>
    <property type="project" value="InterPro"/>
</dbReference>
<dbReference type="GO" id="GO:0042803">
    <property type="term" value="F:protein homodimerization activity"/>
    <property type="evidence" value="ECO:0007669"/>
    <property type="project" value="InterPro"/>
</dbReference>
<dbReference type="GO" id="GO:0051087">
    <property type="term" value="F:protein-folding chaperone binding"/>
    <property type="evidence" value="ECO:0007669"/>
    <property type="project" value="InterPro"/>
</dbReference>
<dbReference type="GO" id="GO:0051082">
    <property type="term" value="F:unfolded protein binding"/>
    <property type="evidence" value="ECO:0007669"/>
    <property type="project" value="TreeGrafter"/>
</dbReference>
<dbReference type="GO" id="GO:0006457">
    <property type="term" value="P:protein folding"/>
    <property type="evidence" value="ECO:0007669"/>
    <property type="project" value="InterPro"/>
</dbReference>
<dbReference type="CDD" id="cd00446">
    <property type="entry name" value="GrpE"/>
    <property type="match status" value="1"/>
</dbReference>
<dbReference type="FunFam" id="2.30.22.10:FF:000001">
    <property type="entry name" value="Protein GrpE"/>
    <property type="match status" value="1"/>
</dbReference>
<dbReference type="Gene3D" id="3.90.20.20">
    <property type="match status" value="1"/>
</dbReference>
<dbReference type="Gene3D" id="2.30.22.10">
    <property type="entry name" value="Head domain of nucleotide exchange factor GrpE"/>
    <property type="match status" value="1"/>
</dbReference>
<dbReference type="HAMAP" id="MF_01151">
    <property type="entry name" value="GrpE"/>
    <property type="match status" value="1"/>
</dbReference>
<dbReference type="InterPro" id="IPR000740">
    <property type="entry name" value="GrpE"/>
</dbReference>
<dbReference type="InterPro" id="IPR013805">
    <property type="entry name" value="GrpE_coiled_coil"/>
</dbReference>
<dbReference type="InterPro" id="IPR009012">
    <property type="entry name" value="GrpE_head"/>
</dbReference>
<dbReference type="NCBIfam" id="NF010738">
    <property type="entry name" value="PRK14140.1"/>
    <property type="match status" value="1"/>
</dbReference>
<dbReference type="NCBIfam" id="NF010739">
    <property type="entry name" value="PRK14141.1"/>
    <property type="match status" value="1"/>
</dbReference>
<dbReference type="NCBIfam" id="NF010748">
    <property type="entry name" value="PRK14150.1"/>
    <property type="match status" value="1"/>
</dbReference>
<dbReference type="PANTHER" id="PTHR21237">
    <property type="entry name" value="GRPE PROTEIN"/>
    <property type="match status" value="1"/>
</dbReference>
<dbReference type="PANTHER" id="PTHR21237:SF23">
    <property type="entry name" value="GRPE PROTEIN HOMOLOG, MITOCHONDRIAL"/>
    <property type="match status" value="1"/>
</dbReference>
<dbReference type="Pfam" id="PF01025">
    <property type="entry name" value="GrpE"/>
    <property type="match status" value="1"/>
</dbReference>
<dbReference type="PRINTS" id="PR00773">
    <property type="entry name" value="GRPEPROTEIN"/>
</dbReference>
<dbReference type="SUPFAM" id="SSF58014">
    <property type="entry name" value="Coiled-coil domain of nucleotide exchange factor GrpE"/>
    <property type="match status" value="1"/>
</dbReference>
<dbReference type="SUPFAM" id="SSF51064">
    <property type="entry name" value="Head domain of nucleotide exchange factor GrpE"/>
    <property type="match status" value="1"/>
</dbReference>
<dbReference type="PROSITE" id="PS01071">
    <property type="entry name" value="GRPE"/>
    <property type="match status" value="1"/>
</dbReference>
<accession>A9ILE9</accession>
<comment type="function">
    <text evidence="1">Participates actively in the response to hyperosmotic and heat shock by preventing the aggregation of stress-denatured proteins, in association with DnaK and GrpE. It is the nucleotide exchange factor for DnaK and may function as a thermosensor. Unfolded proteins bind initially to DnaJ; upon interaction with the DnaJ-bound protein, DnaK hydrolyzes its bound ATP, resulting in the formation of a stable complex. GrpE releases ADP from DnaK; ATP binding to DnaK triggers the release of the substrate protein, thus completing the reaction cycle. Several rounds of ATP-dependent interactions between DnaJ, DnaK and GrpE are required for fully efficient folding.</text>
</comment>
<comment type="subunit">
    <text evidence="1">Homodimer.</text>
</comment>
<comment type="subcellular location">
    <subcellularLocation>
        <location evidence="1">Cytoplasm</location>
    </subcellularLocation>
</comment>
<comment type="similarity">
    <text evidence="1">Belongs to the GrpE family.</text>
</comment>
<protein>
    <recommendedName>
        <fullName evidence="1">Protein GrpE</fullName>
    </recommendedName>
    <alternativeName>
        <fullName evidence="1">HSP-70 cofactor</fullName>
    </alternativeName>
</protein>
<keyword id="KW-0143">Chaperone</keyword>
<keyword id="KW-0963">Cytoplasm</keyword>
<keyword id="KW-0346">Stress response</keyword>
<reference key="1">
    <citation type="journal article" date="2007" name="Nat. Genet.">
        <title>Genomic analysis of Bartonella identifies type IV secretion systems as host adaptability factors.</title>
        <authorList>
            <person name="Saenz H.L."/>
            <person name="Engel P."/>
            <person name="Stoeckli M.C."/>
            <person name="Lanz C."/>
            <person name="Raddatz G."/>
            <person name="Vayssier-Taussat M."/>
            <person name="Birtles R."/>
            <person name="Schuster S.C."/>
            <person name="Dehio C."/>
        </authorList>
    </citation>
    <scope>NUCLEOTIDE SEQUENCE [LARGE SCALE GENOMIC DNA]</scope>
    <source>
        <strain>CIP 105476 / IBS 506</strain>
    </source>
</reference>
<sequence length="222" mass="24700">MSDEKNKFTDASFENCDLKNPADRNTLKQAADEFLKTHKTEAREDVEEESKEVDPLASLQDENKELKNQLLRLAADMENLRRRTARDVADARAYSIANFARDMLSVSDNLNRALEAIPEGARESDAGLKSLAEGVEMTERAMMAALERHGVQKIHPEGQKFDPHFHQAMFEIPNADVPDNTVQQVVQAGYIIGERVLRPAIVGVAKGGTKEASIETDKASHQ</sequence>
<proteinExistence type="inferred from homology"/>
<name>GRPE_BART1</name>
<gene>
    <name evidence="1" type="primary">grpE</name>
    <name type="ordered locus">BT_0056</name>
</gene>
<organism>
    <name type="scientific">Bartonella tribocorum (strain CIP 105476 / IBS 506)</name>
    <dbReference type="NCBI Taxonomy" id="382640"/>
    <lineage>
        <taxon>Bacteria</taxon>
        <taxon>Pseudomonadati</taxon>
        <taxon>Pseudomonadota</taxon>
        <taxon>Alphaproteobacteria</taxon>
        <taxon>Hyphomicrobiales</taxon>
        <taxon>Bartonellaceae</taxon>
        <taxon>Bartonella</taxon>
    </lineage>
</organism>